<protein>
    <recommendedName>
        <fullName evidence="1">tRNA dimethylallyltransferase</fullName>
        <ecNumber evidence="1">2.5.1.75</ecNumber>
    </recommendedName>
    <alternativeName>
        <fullName evidence="1">Dimethylallyl diphosphate:tRNA dimethylallyltransferase</fullName>
        <shortName evidence="1">DMAPP:tRNA dimethylallyltransferase</shortName>
        <shortName evidence="1">DMATase</shortName>
    </alternativeName>
    <alternativeName>
        <fullName evidence="1">Isopentenyl-diphosphate:tRNA isopentenyltransferase</fullName>
        <shortName evidence="1">IPP transferase</shortName>
        <shortName evidence="1">IPPT</shortName>
        <shortName evidence="1">IPTase</shortName>
    </alternativeName>
</protein>
<feature type="chain" id="PRO_0000377045" description="tRNA dimethylallyltransferase">
    <location>
        <begin position="1"/>
        <end position="315"/>
    </location>
</feature>
<feature type="region of interest" description="Interaction with substrate tRNA" evidence="1">
    <location>
        <begin position="34"/>
        <end position="37"/>
    </location>
</feature>
<feature type="region of interest" description="Interaction with substrate tRNA" evidence="1">
    <location>
        <begin position="158"/>
        <end position="162"/>
    </location>
</feature>
<feature type="binding site" evidence="1">
    <location>
        <begin position="9"/>
        <end position="16"/>
    </location>
    <ligand>
        <name>ATP</name>
        <dbReference type="ChEBI" id="CHEBI:30616"/>
    </ligand>
</feature>
<feature type="binding site" evidence="1">
    <location>
        <begin position="11"/>
        <end position="16"/>
    </location>
    <ligand>
        <name>substrate</name>
    </ligand>
</feature>
<feature type="site" description="Interaction with substrate tRNA" evidence="1">
    <location>
        <position position="100"/>
    </location>
</feature>
<feature type="site" description="Interaction with substrate tRNA" evidence="1">
    <location>
        <position position="122"/>
    </location>
</feature>
<comment type="function">
    <text evidence="1">Catalyzes the transfer of a dimethylallyl group onto the adenine at position 37 in tRNAs that read codons beginning with uridine, leading to the formation of N6-(dimethylallyl)adenosine (i(6)A).</text>
</comment>
<comment type="catalytic activity">
    <reaction evidence="1">
        <text>adenosine(37) in tRNA + dimethylallyl diphosphate = N(6)-dimethylallyladenosine(37) in tRNA + diphosphate</text>
        <dbReference type="Rhea" id="RHEA:26482"/>
        <dbReference type="Rhea" id="RHEA-COMP:10162"/>
        <dbReference type="Rhea" id="RHEA-COMP:10375"/>
        <dbReference type="ChEBI" id="CHEBI:33019"/>
        <dbReference type="ChEBI" id="CHEBI:57623"/>
        <dbReference type="ChEBI" id="CHEBI:74411"/>
        <dbReference type="ChEBI" id="CHEBI:74415"/>
        <dbReference type="EC" id="2.5.1.75"/>
    </reaction>
</comment>
<comment type="cofactor">
    <cofactor evidence="1">
        <name>Mg(2+)</name>
        <dbReference type="ChEBI" id="CHEBI:18420"/>
    </cofactor>
</comment>
<comment type="subunit">
    <text evidence="1">Monomer.</text>
</comment>
<comment type="similarity">
    <text evidence="1">Belongs to the IPP transferase family.</text>
</comment>
<dbReference type="EC" id="2.5.1.75" evidence="1"/>
<dbReference type="EMBL" id="CP001132">
    <property type="protein sequence ID" value="ACH83822.1"/>
    <property type="molecule type" value="Genomic_DNA"/>
</dbReference>
<dbReference type="RefSeq" id="WP_009562411.1">
    <property type="nucleotide sequence ID" value="NC_011206.1"/>
</dbReference>
<dbReference type="SMR" id="B5EJE8"/>
<dbReference type="GeneID" id="65281081"/>
<dbReference type="KEGG" id="afe:Lferr_1600"/>
<dbReference type="eggNOG" id="COG0324">
    <property type="taxonomic scope" value="Bacteria"/>
</dbReference>
<dbReference type="HOGENOM" id="CLU_032616_0_0_6"/>
<dbReference type="GO" id="GO:0005524">
    <property type="term" value="F:ATP binding"/>
    <property type="evidence" value="ECO:0007669"/>
    <property type="project" value="UniProtKB-UniRule"/>
</dbReference>
<dbReference type="GO" id="GO:0052381">
    <property type="term" value="F:tRNA dimethylallyltransferase activity"/>
    <property type="evidence" value="ECO:0007669"/>
    <property type="project" value="UniProtKB-UniRule"/>
</dbReference>
<dbReference type="GO" id="GO:0006400">
    <property type="term" value="P:tRNA modification"/>
    <property type="evidence" value="ECO:0007669"/>
    <property type="project" value="TreeGrafter"/>
</dbReference>
<dbReference type="Gene3D" id="1.10.20.140">
    <property type="match status" value="1"/>
</dbReference>
<dbReference type="Gene3D" id="3.40.50.300">
    <property type="entry name" value="P-loop containing nucleotide triphosphate hydrolases"/>
    <property type="match status" value="1"/>
</dbReference>
<dbReference type="HAMAP" id="MF_00185">
    <property type="entry name" value="IPP_trans"/>
    <property type="match status" value="1"/>
</dbReference>
<dbReference type="InterPro" id="IPR039657">
    <property type="entry name" value="Dimethylallyltransferase"/>
</dbReference>
<dbReference type="InterPro" id="IPR018022">
    <property type="entry name" value="IPT"/>
</dbReference>
<dbReference type="InterPro" id="IPR027417">
    <property type="entry name" value="P-loop_NTPase"/>
</dbReference>
<dbReference type="NCBIfam" id="TIGR00174">
    <property type="entry name" value="miaA"/>
    <property type="match status" value="1"/>
</dbReference>
<dbReference type="PANTHER" id="PTHR11088">
    <property type="entry name" value="TRNA DIMETHYLALLYLTRANSFERASE"/>
    <property type="match status" value="1"/>
</dbReference>
<dbReference type="PANTHER" id="PTHR11088:SF60">
    <property type="entry name" value="TRNA DIMETHYLALLYLTRANSFERASE"/>
    <property type="match status" value="1"/>
</dbReference>
<dbReference type="Pfam" id="PF01715">
    <property type="entry name" value="IPPT"/>
    <property type="match status" value="1"/>
</dbReference>
<dbReference type="SUPFAM" id="SSF52540">
    <property type="entry name" value="P-loop containing nucleoside triphosphate hydrolases"/>
    <property type="match status" value="2"/>
</dbReference>
<proteinExistence type="inferred from homology"/>
<accession>B5EJE8</accession>
<keyword id="KW-0067">ATP-binding</keyword>
<keyword id="KW-0460">Magnesium</keyword>
<keyword id="KW-0547">Nucleotide-binding</keyword>
<keyword id="KW-0808">Transferase</keyword>
<keyword id="KW-0819">tRNA processing</keyword>
<gene>
    <name evidence="1" type="primary">miaA</name>
    <name type="ordered locus">Lferr_1600</name>
</gene>
<organism>
    <name type="scientific">Acidithiobacillus ferrooxidans (strain ATCC 53993 / BNL-5-31)</name>
    <name type="common">Leptospirillum ferrooxidans (ATCC 53993)</name>
    <dbReference type="NCBI Taxonomy" id="380394"/>
    <lineage>
        <taxon>Bacteria</taxon>
        <taxon>Pseudomonadati</taxon>
        <taxon>Pseudomonadota</taxon>
        <taxon>Acidithiobacillia</taxon>
        <taxon>Acidithiobacillales</taxon>
        <taxon>Acidithiobacillaceae</taxon>
        <taxon>Acidithiobacillus</taxon>
    </lineage>
</organism>
<name>MIAA_ACIF5</name>
<evidence type="ECO:0000255" key="1">
    <source>
        <dbReference type="HAMAP-Rule" id="MF_00185"/>
    </source>
</evidence>
<sequence>MIPAIFLMGPTASGKTELAVRLADALPIDIISVDSLLVYRHFDIGSAKPSLALRQQYPHALVDIREPDEPYSAGLFREDALHCIALARERGRIPLLVGGTGLYFRALECGIDTLPPANPALRQSLMALAETAGWPALHQRLATLDPEAAAGIAPHDRQRIQRALEIILGSGQTISGARHWQGTFPGPLYKIILRPPRSWLHQRITQRFDVMLNEGFLDEIADLSARHYAPELPAMRAVGYRQYFTWHDGLCSAAEAYQAALAATRQLAKRQDTWFKRESAHYYLDPSRDDASSLLLQMATRPRQGEVHSIGWDNG</sequence>
<reference key="1">
    <citation type="submission" date="2008-08" db="EMBL/GenBank/DDBJ databases">
        <title>Complete sequence of Acidithiobacillus ferrooxidans ATCC 53993.</title>
        <authorList>
            <person name="Lucas S."/>
            <person name="Copeland A."/>
            <person name="Lapidus A."/>
            <person name="Glavina del Rio T."/>
            <person name="Dalin E."/>
            <person name="Tice H."/>
            <person name="Bruce D."/>
            <person name="Goodwin L."/>
            <person name="Pitluck S."/>
            <person name="Sims D."/>
            <person name="Brettin T."/>
            <person name="Detter J.C."/>
            <person name="Han C."/>
            <person name="Kuske C.R."/>
            <person name="Larimer F."/>
            <person name="Land M."/>
            <person name="Hauser L."/>
            <person name="Kyrpides N."/>
            <person name="Lykidis A."/>
            <person name="Borole A.P."/>
        </authorList>
    </citation>
    <scope>NUCLEOTIDE SEQUENCE [LARGE SCALE GENOMIC DNA]</scope>
    <source>
        <strain>ATCC 53993 / BNL-5-31</strain>
    </source>
</reference>